<sequence length="93" mass="10368">MATRLSDAEIEERLGDLTGWTRQGNEIRKTFQLPSFPSAIAFVVNVAFLAEAAGHHPDIDIRWRKVTLSLTTHDAGGLTQKDFDLATQIDEIM</sequence>
<protein>
    <recommendedName>
        <fullName evidence="1">Putative pterin-4-alpha-carbinolamine dehydratase</fullName>
        <shortName evidence="1">PHS</shortName>
        <ecNumber evidence="1">4.2.1.96</ecNumber>
    </recommendedName>
    <alternativeName>
        <fullName evidence="1">4-alpha-hydroxy-tetrahydropterin dehydratase</fullName>
    </alternativeName>
    <alternativeName>
        <fullName evidence="1">Pterin carbinolamine dehydratase</fullName>
        <shortName evidence="1">PCD</shortName>
    </alternativeName>
</protein>
<evidence type="ECO:0000255" key="1">
    <source>
        <dbReference type="HAMAP-Rule" id="MF_00434"/>
    </source>
</evidence>
<reference key="1">
    <citation type="submission" date="2007-04" db="EMBL/GenBank/DDBJ databases">
        <title>Complete sequence of Roseiflexus sp. RS-1.</title>
        <authorList>
            <consortium name="US DOE Joint Genome Institute"/>
            <person name="Copeland A."/>
            <person name="Lucas S."/>
            <person name="Lapidus A."/>
            <person name="Barry K."/>
            <person name="Detter J.C."/>
            <person name="Glavina del Rio T."/>
            <person name="Hammon N."/>
            <person name="Israni S."/>
            <person name="Dalin E."/>
            <person name="Tice H."/>
            <person name="Pitluck S."/>
            <person name="Chertkov O."/>
            <person name="Brettin T."/>
            <person name="Bruce D."/>
            <person name="Han C."/>
            <person name="Schmutz J."/>
            <person name="Larimer F."/>
            <person name="Land M."/>
            <person name="Hauser L."/>
            <person name="Kyrpides N."/>
            <person name="Mikhailova N."/>
            <person name="Bryant D.A."/>
            <person name="Richardson P."/>
        </authorList>
    </citation>
    <scope>NUCLEOTIDE SEQUENCE [LARGE SCALE GENOMIC DNA]</scope>
    <source>
        <strain>RS-1</strain>
    </source>
</reference>
<name>PHS_ROSS1</name>
<gene>
    <name type="ordered locus">RoseRS_0192</name>
</gene>
<accession>A5UPS5</accession>
<keyword id="KW-0456">Lyase</keyword>
<organism>
    <name type="scientific">Roseiflexus sp. (strain RS-1)</name>
    <dbReference type="NCBI Taxonomy" id="357808"/>
    <lineage>
        <taxon>Bacteria</taxon>
        <taxon>Bacillati</taxon>
        <taxon>Chloroflexota</taxon>
        <taxon>Chloroflexia</taxon>
        <taxon>Chloroflexales</taxon>
        <taxon>Roseiflexineae</taxon>
        <taxon>Roseiflexaceae</taxon>
        <taxon>Roseiflexus</taxon>
    </lineage>
</organism>
<proteinExistence type="inferred from homology"/>
<comment type="catalytic activity">
    <reaction evidence="1">
        <text>(4aS,6R)-4a-hydroxy-L-erythro-5,6,7,8-tetrahydrobiopterin = (6R)-L-erythro-6,7-dihydrobiopterin + H2O</text>
        <dbReference type="Rhea" id="RHEA:11920"/>
        <dbReference type="ChEBI" id="CHEBI:15377"/>
        <dbReference type="ChEBI" id="CHEBI:15642"/>
        <dbReference type="ChEBI" id="CHEBI:43120"/>
        <dbReference type="EC" id="4.2.1.96"/>
    </reaction>
</comment>
<comment type="similarity">
    <text evidence="1">Belongs to the pterin-4-alpha-carbinolamine dehydratase family.</text>
</comment>
<dbReference type="EC" id="4.2.1.96" evidence="1"/>
<dbReference type="EMBL" id="CP000686">
    <property type="protein sequence ID" value="ABQ88628.1"/>
    <property type="molecule type" value="Genomic_DNA"/>
</dbReference>
<dbReference type="RefSeq" id="WP_011954987.1">
    <property type="nucleotide sequence ID" value="NC_009523.1"/>
</dbReference>
<dbReference type="SMR" id="A5UPS5"/>
<dbReference type="STRING" id="357808.RoseRS_0192"/>
<dbReference type="KEGG" id="rrs:RoseRS_0192"/>
<dbReference type="eggNOG" id="COG2154">
    <property type="taxonomic scope" value="Bacteria"/>
</dbReference>
<dbReference type="HOGENOM" id="CLU_081974_4_0_0"/>
<dbReference type="OrthoDB" id="9800108at2"/>
<dbReference type="Proteomes" id="UP000006554">
    <property type="component" value="Chromosome"/>
</dbReference>
<dbReference type="GO" id="GO:0008124">
    <property type="term" value="F:4-alpha-hydroxytetrahydrobiopterin dehydratase activity"/>
    <property type="evidence" value="ECO:0007669"/>
    <property type="project" value="UniProtKB-UniRule"/>
</dbReference>
<dbReference type="GO" id="GO:0006729">
    <property type="term" value="P:tetrahydrobiopterin biosynthetic process"/>
    <property type="evidence" value="ECO:0007669"/>
    <property type="project" value="InterPro"/>
</dbReference>
<dbReference type="CDD" id="cd00488">
    <property type="entry name" value="PCD_DCoH"/>
    <property type="match status" value="1"/>
</dbReference>
<dbReference type="Gene3D" id="3.30.1360.20">
    <property type="entry name" value="Transcriptional coactivator/pterin dehydratase"/>
    <property type="match status" value="1"/>
</dbReference>
<dbReference type="HAMAP" id="MF_00434">
    <property type="entry name" value="Pterin_4_alpha"/>
    <property type="match status" value="1"/>
</dbReference>
<dbReference type="InterPro" id="IPR036428">
    <property type="entry name" value="PCD_sf"/>
</dbReference>
<dbReference type="InterPro" id="IPR001533">
    <property type="entry name" value="Pterin_deHydtase"/>
</dbReference>
<dbReference type="NCBIfam" id="NF002017">
    <property type="entry name" value="PRK00823.1-2"/>
    <property type="match status" value="1"/>
</dbReference>
<dbReference type="PANTHER" id="PTHR12599">
    <property type="entry name" value="PTERIN-4-ALPHA-CARBINOLAMINE DEHYDRATASE"/>
    <property type="match status" value="1"/>
</dbReference>
<dbReference type="PANTHER" id="PTHR12599:SF0">
    <property type="entry name" value="PTERIN-4-ALPHA-CARBINOLAMINE DEHYDRATASE"/>
    <property type="match status" value="1"/>
</dbReference>
<dbReference type="Pfam" id="PF01329">
    <property type="entry name" value="Pterin_4a"/>
    <property type="match status" value="1"/>
</dbReference>
<dbReference type="SUPFAM" id="SSF55248">
    <property type="entry name" value="PCD-like"/>
    <property type="match status" value="1"/>
</dbReference>
<feature type="chain" id="PRO_1000192934" description="Putative pterin-4-alpha-carbinolamine dehydratase">
    <location>
        <begin position="1"/>
        <end position="93"/>
    </location>
</feature>